<organism>
    <name type="scientific">Dictyostelium discoideum</name>
    <name type="common">Social amoeba</name>
    <dbReference type="NCBI Taxonomy" id="44689"/>
    <lineage>
        <taxon>Eukaryota</taxon>
        <taxon>Amoebozoa</taxon>
        <taxon>Evosea</taxon>
        <taxon>Eumycetozoa</taxon>
        <taxon>Dictyostelia</taxon>
        <taxon>Dictyosteliales</taxon>
        <taxon>Dictyosteliaceae</taxon>
        <taxon>Dictyostelium</taxon>
    </lineage>
</organism>
<protein>
    <recommendedName>
        <fullName>Putative uncharacterized transmembrane protein DDB_G0284159</fullName>
    </recommendedName>
</protein>
<feature type="chain" id="PRO_0000350915" description="Putative uncharacterized transmembrane protein DDB_G0284159">
    <location>
        <begin position="1"/>
        <end position="86"/>
    </location>
</feature>
<feature type="transmembrane region" description="Helical" evidence="1">
    <location>
        <begin position="63"/>
        <end position="85"/>
    </location>
</feature>
<sequence length="86" mass="10444">MGQNQNKKSIFKGIKISIQLKYKSKNLFLIKKKKKITIRENVNFQNREKLNLMLCFCLIHIHVGGRSPSIQNSFFFFFFFFFFFFF</sequence>
<name>Y8578_DICDI</name>
<proteinExistence type="predicted"/>
<evidence type="ECO:0000255" key="1"/>
<evidence type="ECO:0000305" key="2"/>
<comment type="subcellular location">
    <subcellularLocation>
        <location evidence="2">Membrane</location>
        <topology evidence="2">Single-pass membrane protein</topology>
    </subcellularLocation>
</comment>
<keyword id="KW-0472">Membrane</keyword>
<keyword id="KW-1185">Reference proteome</keyword>
<keyword id="KW-0812">Transmembrane</keyword>
<keyword id="KW-1133">Transmembrane helix</keyword>
<gene>
    <name type="ORF">DDB_G0284159</name>
</gene>
<accession>Q54Q42</accession>
<dbReference type="EMBL" id="AAFI02000063">
    <property type="protein sequence ID" value="EAL65420.1"/>
    <property type="molecule type" value="Genomic_DNA"/>
</dbReference>
<dbReference type="RefSeq" id="XP_638755.1">
    <property type="nucleotide sequence ID" value="XM_633663.1"/>
</dbReference>
<dbReference type="SMR" id="Q54Q42"/>
<dbReference type="PaxDb" id="44689-DDB0218578"/>
<dbReference type="EnsemblProtists" id="EAL65420">
    <property type="protein sequence ID" value="EAL65420"/>
    <property type="gene ID" value="DDB_G0284159"/>
</dbReference>
<dbReference type="GeneID" id="8624425"/>
<dbReference type="KEGG" id="ddi:DDB_G0284159"/>
<dbReference type="VEuPathDB" id="AmoebaDB:DDB_G0284159"/>
<dbReference type="HOGENOM" id="CLU_2502637_0_0_1"/>
<dbReference type="InParanoid" id="Q54Q42"/>
<dbReference type="PRO" id="PR:Q54Q42"/>
<dbReference type="Proteomes" id="UP000002195">
    <property type="component" value="Chromosome 4"/>
</dbReference>
<dbReference type="GO" id="GO:0016020">
    <property type="term" value="C:membrane"/>
    <property type="evidence" value="ECO:0007669"/>
    <property type="project" value="UniProtKB-SubCell"/>
</dbReference>
<reference key="1">
    <citation type="journal article" date="2005" name="Nature">
        <title>The genome of the social amoeba Dictyostelium discoideum.</title>
        <authorList>
            <person name="Eichinger L."/>
            <person name="Pachebat J.A."/>
            <person name="Gloeckner G."/>
            <person name="Rajandream M.A."/>
            <person name="Sucgang R."/>
            <person name="Berriman M."/>
            <person name="Song J."/>
            <person name="Olsen R."/>
            <person name="Szafranski K."/>
            <person name="Xu Q."/>
            <person name="Tunggal B."/>
            <person name="Kummerfeld S."/>
            <person name="Madera M."/>
            <person name="Konfortov B.A."/>
            <person name="Rivero F."/>
            <person name="Bankier A.T."/>
            <person name="Lehmann R."/>
            <person name="Hamlin N."/>
            <person name="Davies R."/>
            <person name="Gaudet P."/>
            <person name="Fey P."/>
            <person name="Pilcher K."/>
            <person name="Chen G."/>
            <person name="Saunders D."/>
            <person name="Sodergren E.J."/>
            <person name="Davis P."/>
            <person name="Kerhornou A."/>
            <person name="Nie X."/>
            <person name="Hall N."/>
            <person name="Anjard C."/>
            <person name="Hemphill L."/>
            <person name="Bason N."/>
            <person name="Farbrother P."/>
            <person name="Desany B."/>
            <person name="Just E."/>
            <person name="Morio T."/>
            <person name="Rost R."/>
            <person name="Churcher C.M."/>
            <person name="Cooper J."/>
            <person name="Haydock S."/>
            <person name="van Driessche N."/>
            <person name="Cronin A."/>
            <person name="Goodhead I."/>
            <person name="Muzny D.M."/>
            <person name="Mourier T."/>
            <person name="Pain A."/>
            <person name="Lu M."/>
            <person name="Harper D."/>
            <person name="Lindsay R."/>
            <person name="Hauser H."/>
            <person name="James K.D."/>
            <person name="Quiles M."/>
            <person name="Madan Babu M."/>
            <person name="Saito T."/>
            <person name="Buchrieser C."/>
            <person name="Wardroper A."/>
            <person name="Felder M."/>
            <person name="Thangavelu M."/>
            <person name="Johnson D."/>
            <person name="Knights A."/>
            <person name="Loulseged H."/>
            <person name="Mungall K.L."/>
            <person name="Oliver K."/>
            <person name="Price C."/>
            <person name="Quail M.A."/>
            <person name="Urushihara H."/>
            <person name="Hernandez J."/>
            <person name="Rabbinowitsch E."/>
            <person name="Steffen D."/>
            <person name="Sanders M."/>
            <person name="Ma J."/>
            <person name="Kohara Y."/>
            <person name="Sharp S."/>
            <person name="Simmonds M.N."/>
            <person name="Spiegler S."/>
            <person name="Tivey A."/>
            <person name="Sugano S."/>
            <person name="White B."/>
            <person name="Walker D."/>
            <person name="Woodward J.R."/>
            <person name="Winckler T."/>
            <person name="Tanaka Y."/>
            <person name="Shaulsky G."/>
            <person name="Schleicher M."/>
            <person name="Weinstock G.M."/>
            <person name="Rosenthal A."/>
            <person name="Cox E.C."/>
            <person name="Chisholm R.L."/>
            <person name="Gibbs R.A."/>
            <person name="Loomis W.F."/>
            <person name="Platzer M."/>
            <person name="Kay R.R."/>
            <person name="Williams J.G."/>
            <person name="Dear P.H."/>
            <person name="Noegel A.A."/>
            <person name="Barrell B.G."/>
            <person name="Kuspa A."/>
        </authorList>
    </citation>
    <scope>NUCLEOTIDE SEQUENCE [LARGE SCALE GENOMIC DNA]</scope>
    <source>
        <strain>AX4</strain>
    </source>
</reference>